<comment type="function">
    <text evidence="1">Voltage-gated channel that enables the transfer of anions such as iodide, chloride, bromide and fluoride which may function in counter-ion conductance and participates in Golgi acidification.</text>
</comment>
<comment type="catalytic activity">
    <reaction evidence="1">
        <text>iodide(out) = iodide(in)</text>
        <dbReference type="Rhea" id="RHEA:66324"/>
        <dbReference type="ChEBI" id="CHEBI:16382"/>
    </reaction>
</comment>
<comment type="catalytic activity">
    <reaction evidence="1">
        <text>chloride(in) = chloride(out)</text>
        <dbReference type="Rhea" id="RHEA:29823"/>
        <dbReference type="ChEBI" id="CHEBI:17996"/>
    </reaction>
</comment>
<comment type="catalytic activity">
    <reaction evidence="1">
        <text>bromide(in) = bromide(out)</text>
        <dbReference type="Rhea" id="RHEA:75383"/>
        <dbReference type="ChEBI" id="CHEBI:15858"/>
    </reaction>
</comment>
<comment type="catalytic activity">
    <reaction evidence="1">
        <text>fluoride(in) = fluoride(out)</text>
        <dbReference type="Rhea" id="RHEA:76159"/>
        <dbReference type="ChEBI" id="CHEBI:17051"/>
    </reaction>
</comment>
<comment type="subunit">
    <text evidence="1">Homotrimer.</text>
</comment>
<comment type="subcellular location">
    <subcellularLocation>
        <location evidence="1">Golgi apparatus membrane</location>
        <topology evidence="2">Multi-pass membrane protein</topology>
    </subcellularLocation>
</comment>
<comment type="similarity">
    <text evidence="3">Belongs to the Golgi pH regulator (TC 1.A.38) family.</text>
</comment>
<keyword id="KW-0325">Glycoprotein</keyword>
<keyword id="KW-0333">Golgi apparatus</keyword>
<keyword id="KW-0407">Ion channel</keyword>
<keyword id="KW-0406">Ion transport</keyword>
<keyword id="KW-0472">Membrane</keyword>
<keyword id="KW-0653">Protein transport</keyword>
<keyword id="KW-1185">Reference proteome</keyword>
<keyword id="KW-0812">Transmembrane</keyword>
<keyword id="KW-1133">Transmembrane helix</keyword>
<keyword id="KW-0813">Transport</keyword>
<keyword id="KW-0851">Voltage-gated channel</keyword>
<gene>
    <name evidence="1" type="primary">GPR89</name>
    <name type="synonym">GPHR</name>
    <name type="ORF">RCJMB04_3g11</name>
</gene>
<proteinExistence type="evidence at transcript level"/>
<protein>
    <recommendedName>
        <fullName evidence="1">Golgi pH regulator</fullName>
    </recommendedName>
    <alternativeName>
        <fullName>Protein GPR89</fullName>
    </alternativeName>
</protein>
<organism>
    <name type="scientific">Gallus gallus</name>
    <name type="common">Chicken</name>
    <dbReference type="NCBI Taxonomy" id="9031"/>
    <lineage>
        <taxon>Eukaryota</taxon>
        <taxon>Metazoa</taxon>
        <taxon>Chordata</taxon>
        <taxon>Craniata</taxon>
        <taxon>Vertebrata</taxon>
        <taxon>Euteleostomi</taxon>
        <taxon>Archelosauria</taxon>
        <taxon>Archosauria</taxon>
        <taxon>Dinosauria</taxon>
        <taxon>Saurischia</taxon>
        <taxon>Theropoda</taxon>
        <taxon>Coelurosauria</taxon>
        <taxon>Aves</taxon>
        <taxon>Neognathae</taxon>
        <taxon>Galloanserae</taxon>
        <taxon>Galliformes</taxon>
        <taxon>Phasianidae</taxon>
        <taxon>Phasianinae</taxon>
        <taxon>Gallus</taxon>
    </lineage>
</organism>
<accession>Q5F448</accession>
<reference key="1">
    <citation type="journal article" date="2005" name="Genome Biol.">
        <title>Full-length cDNAs from chicken bursal lymphocytes to facilitate gene function analysis.</title>
        <authorList>
            <person name="Caldwell R.B."/>
            <person name="Kierzek A.M."/>
            <person name="Arakawa H."/>
            <person name="Bezzubov Y."/>
            <person name="Zaim J."/>
            <person name="Fiedler P."/>
            <person name="Kutter S."/>
            <person name="Blagodatski A."/>
            <person name="Kostovska D."/>
            <person name="Koter M."/>
            <person name="Plachy J."/>
            <person name="Carninci P."/>
            <person name="Hayashizaki Y."/>
            <person name="Buerstedde J.-M."/>
        </authorList>
    </citation>
    <scope>NUCLEOTIDE SEQUENCE [LARGE SCALE MRNA]</scope>
    <source>
        <strain>CB</strain>
        <tissue>Bursa of Fabricius</tissue>
    </source>
</reference>
<feature type="chain" id="PRO_0000223262" description="Golgi pH regulator">
    <location>
        <begin position="1"/>
        <end position="455"/>
    </location>
</feature>
<feature type="transmembrane region" description="Helical" evidence="2">
    <location>
        <begin position="5"/>
        <end position="25"/>
    </location>
</feature>
<feature type="transmembrane region" description="Helical" evidence="2">
    <location>
        <begin position="46"/>
        <end position="66"/>
    </location>
</feature>
<feature type="transmembrane region" description="Helical" evidence="2">
    <location>
        <begin position="79"/>
        <end position="99"/>
    </location>
</feature>
<feature type="transmembrane region" description="Helical" evidence="2">
    <location>
        <begin position="111"/>
        <end position="131"/>
    </location>
</feature>
<feature type="transmembrane region" description="Helical" evidence="2">
    <location>
        <begin position="150"/>
        <end position="170"/>
    </location>
</feature>
<feature type="transmembrane region" description="Helical" evidence="2">
    <location>
        <begin position="290"/>
        <end position="310"/>
    </location>
</feature>
<feature type="transmembrane region" description="Helical" evidence="2">
    <location>
        <begin position="343"/>
        <end position="363"/>
    </location>
</feature>
<feature type="transmembrane region" description="Helical" evidence="2">
    <location>
        <begin position="378"/>
        <end position="398"/>
    </location>
</feature>
<feature type="transmembrane region" description="Helical" evidence="2">
    <location>
        <begin position="425"/>
        <end position="445"/>
    </location>
</feature>
<feature type="glycosylation site" description="N-linked (GlcNAc...) asparagine" evidence="2">
    <location>
        <position position="67"/>
    </location>
</feature>
<feature type="glycosylation site" description="N-linked (GlcNAc...) asparagine" evidence="2">
    <location>
        <position position="180"/>
    </location>
</feature>
<feature type="glycosylation site" description="N-linked (GlcNAc...) asparagine" evidence="2">
    <location>
        <position position="243"/>
    </location>
</feature>
<dbReference type="EMBL" id="AJ851452">
    <property type="protein sequence ID" value="CAH65086.1"/>
    <property type="molecule type" value="mRNA"/>
</dbReference>
<dbReference type="RefSeq" id="NP_001025962.1">
    <property type="nucleotide sequence ID" value="NM_001030791.1"/>
</dbReference>
<dbReference type="SMR" id="Q5F448"/>
<dbReference type="FunCoup" id="Q5F448">
    <property type="interactions" value="923"/>
</dbReference>
<dbReference type="STRING" id="9031.ENSGALP00000024938"/>
<dbReference type="GlyCosmos" id="Q5F448">
    <property type="glycosylation" value="3 sites, No reported glycans"/>
</dbReference>
<dbReference type="GlyGen" id="Q5F448">
    <property type="glycosylation" value="3 sites"/>
</dbReference>
<dbReference type="PaxDb" id="9031-ENSGALP00000024938"/>
<dbReference type="Ensembl" id="ENSGALT00010018019.1">
    <property type="protein sequence ID" value="ENSGALP00010009924.1"/>
    <property type="gene ID" value="ENSGALG00010007569.1"/>
</dbReference>
<dbReference type="GeneID" id="418459"/>
<dbReference type="KEGG" id="gga:418459"/>
<dbReference type="CTD" id="653519"/>
<dbReference type="VEuPathDB" id="HostDB:geneid_418459"/>
<dbReference type="eggNOG" id="KOG2417">
    <property type="taxonomic scope" value="Eukaryota"/>
</dbReference>
<dbReference type="GeneTree" id="ENSGT00390000000684"/>
<dbReference type="HOGENOM" id="CLU_030540_1_0_1"/>
<dbReference type="InParanoid" id="Q5F448"/>
<dbReference type="OrthoDB" id="264392at2759"/>
<dbReference type="PhylomeDB" id="Q5F448"/>
<dbReference type="TreeFam" id="TF313484"/>
<dbReference type="PRO" id="PR:Q5F448"/>
<dbReference type="Proteomes" id="UP000000539">
    <property type="component" value="Chromosome 1"/>
</dbReference>
<dbReference type="Bgee" id="ENSGALG00000015491">
    <property type="expression patterns" value="Expressed in kidney and 13 other cell types or tissues"/>
</dbReference>
<dbReference type="GO" id="GO:0032580">
    <property type="term" value="C:Golgi cisterna membrane"/>
    <property type="evidence" value="ECO:0000250"/>
    <property type="project" value="UniProtKB"/>
</dbReference>
<dbReference type="GO" id="GO:0000139">
    <property type="term" value="C:Golgi membrane"/>
    <property type="evidence" value="ECO:0007669"/>
    <property type="project" value="UniProtKB-SubCell"/>
</dbReference>
<dbReference type="GO" id="GO:0030660">
    <property type="term" value="C:Golgi-associated vesicle membrane"/>
    <property type="evidence" value="ECO:0000250"/>
    <property type="project" value="UniProtKB"/>
</dbReference>
<dbReference type="GO" id="GO:0034702">
    <property type="term" value="C:monoatomic ion channel complex"/>
    <property type="evidence" value="ECO:0007669"/>
    <property type="project" value="UniProtKB-KW"/>
</dbReference>
<dbReference type="GO" id="GO:0008308">
    <property type="term" value="F:voltage-gated monoatomic anion channel activity"/>
    <property type="evidence" value="ECO:0000250"/>
    <property type="project" value="UniProtKB"/>
</dbReference>
<dbReference type="GO" id="GO:0051452">
    <property type="term" value="P:intracellular pH reduction"/>
    <property type="evidence" value="ECO:0000250"/>
    <property type="project" value="UniProtKB"/>
</dbReference>
<dbReference type="GO" id="GO:0015031">
    <property type="term" value="P:protein transport"/>
    <property type="evidence" value="ECO:0007669"/>
    <property type="project" value="UniProtKB-KW"/>
</dbReference>
<dbReference type="GO" id="GO:0043588">
    <property type="term" value="P:skin development"/>
    <property type="evidence" value="ECO:0007669"/>
    <property type="project" value="Ensembl"/>
</dbReference>
<dbReference type="GO" id="GO:0030217">
    <property type="term" value="P:T cell differentiation"/>
    <property type="evidence" value="ECO:0007669"/>
    <property type="project" value="Ensembl"/>
</dbReference>
<dbReference type="InterPro" id="IPR025969">
    <property type="entry name" value="ABA_GPCR_dom"/>
</dbReference>
<dbReference type="InterPro" id="IPR022535">
    <property type="entry name" value="Golgi_pH-regulator_cons_dom"/>
</dbReference>
<dbReference type="InterPro" id="IPR015672">
    <property type="entry name" value="GPHR/GTG"/>
</dbReference>
<dbReference type="PANTHER" id="PTHR15948">
    <property type="entry name" value="G-PROTEIN COUPLED RECEPTOR 89-RELATED"/>
    <property type="match status" value="1"/>
</dbReference>
<dbReference type="PANTHER" id="PTHR15948:SF0">
    <property type="entry name" value="GOLGI PH REGULATOR A-RELATED"/>
    <property type="match status" value="1"/>
</dbReference>
<dbReference type="Pfam" id="PF12430">
    <property type="entry name" value="ABA_GPCR"/>
    <property type="match status" value="1"/>
</dbReference>
<dbReference type="Pfam" id="PF12537">
    <property type="entry name" value="GPHR_N"/>
    <property type="match status" value="1"/>
</dbReference>
<name>GPHR_CHICK</name>
<sequence>MSFLIDSSIMVTSQVLFFGFGWLFFMRKLFKDYEVRQYVVQVIFSVTFAFSCTMFELIIFEILGVLNSSSRYFHWKLNLCVILLILVFMVPFYIGYFVVSNIRLLHRQKLLFACVLWLTFMYFFWKLGDPFPILSPKHGILSIEQLISRVGVIGVTLMALLSGFGAVNCPYTYMSYFLRNVTDADILALERRLLQTMDMIISKKKRIAVAHRTMFQRGEVHNKPTGFWGMIKSVTTSVAGSENLSLIQQEVDALEELSRQLFLETADLHATKERIEYSKTFQGKYFNFLGYFFSIYCVWKIFMATINIVFDRVGKTDPVTRGIEITVNYLGIQFDVKFWSQHISFILVGIIIVTSIRGLLITLTKFFYAISSSKSSNVIVLLLAQIMGMYFVSSVLLIRMSMPLEYRTIITEVLGELQFNFYHRWFDVIFLVSALSSILFLYLAHKQAPEKHMAL</sequence>
<evidence type="ECO:0000250" key="1">
    <source>
        <dbReference type="UniProtKB" id="P0CG08"/>
    </source>
</evidence>
<evidence type="ECO:0000255" key="2"/>
<evidence type="ECO:0000305" key="3"/>